<protein>
    <recommendedName>
        <fullName evidence="1">Histidinol-phosphate aminotransferase</fullName>
        <ecNumber evidence="1">2.6.1.9</ecNumber>
    </recommendedName>
    <alternativeName>
        <fullName evidence="1">Imidazole acetol-phosphate transaminase</fullName>
    </alternativeName>
</protein>
<accession>A6LAM2</accession>
<gene>
    <name evidence="1" type="primary">hisC</name>
    <name type="ordered locus">BDI_0968</name>
</gene>
<proteinExistence type="inferred from homology"/>
<dbReference type="EC" id="2.6.1.9" evidence="1"/>
<dbReference type="EMBL" id="CP000140">
    <property type="protein sequence ID" value="ABR42736.1"/>
    <property type="molecule type" value="Genomic_DNA"/>
</dbReference>
<dbReference type="RefSeq" id="WP_005857193.1">
    <property type="nucleotide sequence ID" value="NC_009615.1"/>
</dbReference>
<dbReference type="SMR" id="A6LAM2"/>
<dbReference type="STRING" id="435591.BDI_0968"/>
<dbReference type="PaxDb" id="435591-BDI_0968"/>
<dbReference type="KEGG" id="pdi:BDI_0968"/>
<dbReference type="eggNOG" id="COG0079">
    <property type="taxonomic scope" value="Bacteria"/>
</dbReference>
<dbReference type="HOGENOM" id="CLU_017584_3_1_10"/>
<dbReference type="BioCyc" id="PDIS435591:G1G5A-1003-MONOMER"/>
<dbReference type="UniPathway" id="UPA00031">
    <property type="reaction ID" value="UER00012"/>
</dbReference>
<dbReference type="Proteomes" id="UP000000566">
    <property type="component" value="Chromosome"/>
</dbReference>
<dbReference type="GO" id="GO:0004400">
    <property type="term" value="F:histidinol-phosphate transaminase activity"/>
    <property type="evidence" value="ECO:0007669"/>
    <property type="project" value="UniProtKB-UniRule"/>
</dbReference>
<dbReference type="GO" id="GO:0030170">
    <property type="term" value="F:pyridoxal phosphate binding"/>
    <property type="evidence" value="ECO:0007669"/>
    <property type="project" value="InterPro"/>
</dbReference>
<dbReference type="GO" id="GO:0000105">
    <property type="term" value="P:L-histidine biosynthetic process"/>
    <property type="evidence" value="ECO:0007669"/>
    <property type="project" value="UniProtKB-UniRule"/>
</dbReference>
<dbReference type="CDD" id="cd00609">
    <property type="entry name" value="AAT_like"/>
    <property type="match status" value="1"/>
</dbReference>
<dbReference type="Gene3D" id="3.90.1150.10">
    <property type="entry name" value="Aspartate Aminotransferase, domain 1"/>
    <property type="match status" value="1"/>
</dbReference>
<dbReference type="Gene3D" id="3.40.640.10">
    <property type="entry name" value="Type I PLP-dependent aspartate aminotransferase-like (Major domain)"/>
    <property type="match status" value="1"/>
</dbReference>
<dbReference type="HAMAP" id="MF_01023">
    <property type="entry name" value="HisC_aminotrans_2"/>
    <property type="match status" value="1"/>
</dbReference>
<dbReference type="InterPro" id="IPR001917">
    <property type="entry name" value="Aminotrans_II_pyridoxalP_BS"/>
</dbReference>
<dbReference type="InterPro" id="IPR004839">
    <property type="entry name" value="Aminotransferase_I/II_large"/>
</dbReference>
<dbReference type="InterPro" id="IPR005861">
    <property type="entry name" value="HisP_aminotrans"/>
</dbReference>
<dbReference type="InterPro" id="IPR015424">
    <property type="entry name" value="PyrdxlP-dep_Trfase"/>
</dbReference>
<dbReference type="InterPro" id="IPR015421">
    <property type="entry name" value="PyrdxlP-dep_Trfase_major"/>
</dbReference>
<dbReference type="InterPro" id="IPR015422">
    <property type="entry name" value="PyrdxlP-dep_Trfase_small"/>
</dbReference>
<dbReference type="NCBIfam" id="TIGR01141">
    <property type="entry name" value="hisC"/>
    <property type="match status" value="1"/>
</dbReference>
<dbReference type="PANTHER" id="PTHR42885:SF2">
    <property type="entry name" value="HISTIDINOL-PHOSPHATE AMINOTRANSFERASE"/>
    <property type="match status" value="1"/>
</dbReference>
<dbReference type="PANTHER" id="PTHR42885">
    <property type="entry name" value="HISTIDINOL-PHOSPHATE AMINOTRANSFERASE-RELATED"/>
    <property type="match status" value="1"/>
</dbReference>
<dbReference type="Pfam" id="PF00155">
    <property type="entry name" value="Aminotran_1_2"/>
    <property type="match status" value="1"/>
</dbReference>
<dbReference type="SUPFAM" id="SSF53383">
    <property type="entry name" value="PLP-dependent transferases"/>
    <property type="match status" value="1"/>
</dbReference>
<dbReference type="PROSITE" id="PS00599">
    <property type="entry name" value="AA_TRANSFER_CLASS_2"/>
    <property type="match status" value="1"/>
</dbReference>
<comment type="catalytic activity">
    <reaction evidence="1">
        <text>L-histidinol phosphate + 2-oxoglutarate = 3-(imidazol-4-yl)-2-oxopropyl phosphate + L-glutamate</text>
        <dbReference type="Rhea" id="RHEA:23744"/>
        <dbReference type="ChEBI" id="CHEBI:16810"/>
        <dbReference type="ChEBI" id="CHEBI:29985"/>
        <dbReference type="ChEBI" id="CHEBI:57766"/>
        <dbReference type="ChEBI" id="CHEBI:57980"/>
        <dbReference type="EC" id="2.6.1.9"/>
    </reaction>
</comment>
<comment type="cofactor">
    <cofactor evidence="1">
        <name>pyridoxal 5'-phosphate</name>
        <dbReference type="ChEBI" id="CHEBI:597326"/>
    </cofactor>
</comment>
<comment type="pathway">
    <text evidence="1">Amino-acid biosynthesis; L-histidine biosynthesis; L-histidine from 5-phospho-alpha-D-ribose 1-diphosphate: step 7/9.</text>
</comment>
<comment type="subunit">
    <text evidence="1">Homodimer.</text>
</comment>
<comment type="similarity">
    <text evidence="1">Belongs to the class-II pyridoxal-phosphate-dependent aminotransferase family. Histidinol-phosphate aminotransferase subfamily.</text>
</comment>
<evidence type="ECO:0000255" key="1">
    <source>
        <dbReference type="HAMAP-Rule" id="MF_01023"/>
    </source>
</evidence>
<name>HIS8_PARD8</name>
<feature type="chain" id="PRO_1000063489" description="Histidinol-phosphate aminotransferase">
    <location>
        <begin position="1"/>
        <end position="345"/>
    </location>
</feature>
<feature type="modified residue" description="N6-(pyridoxal phosphate)lysine" evidence="1">
    <location>
        <position position="205"/>
    </location>
</feature>
<keyword id="KW-0028">Amino-acid biosynthesis</keyword>
<keyword id="KW-0032">Aminotransferase</keyword>
<keyword id="KW-0368">Histidine biosynthesis</keyword>
<keyword id="KW-0663">Pyridoxal phosphate</keyword>
<keyword id="KW-1185">Reference proteome</keyword>
<keyword id="KW-0808">Transferase</keyword>
<sequence length="345" mass="38728">MKDLKDLVRPNVWNLKPYSSARDEFHGDASVFLDANENPWNMPYNRYPDPLQWKLKDRLAVLKGVDRSSIFLGNGSDEAIDLVIRAFCEPGLDSVVTISPSYGMYEVAANVNNVECRKVSLDENFDLDAEAVLESADEWTKVIFLCSPNNPSGNSLDRGSIYKILKNYEGIVVIDEAYIDFSAYPSFLKELSGFPNLIVLQTLSKAWGAAGIRLGMAFASPEIIGVLNKIKYPYNVNQLTQEKALELLNDEATMKHQVNEILTERNRLEKILSEPPFSYQVYPSDANFLLVNVAKADAMYNGLVKKGIVVRNRSNVQKCRGCLRITIGTPKENDSLLNAMKNMKL</sequence>
<reference key="1">
    <citation type="journal article" date="2007" name="PLoS Biol.">
        <title>Evolution of symbiotic bacteria in the distal human intestine.</title>
        <authorList>
            <person name="Xu J."/>
            <person name="Mahowald M.A."/>
            <person name="Ley R.E."/>
            <person name="Lozupone C.A."/>
            <person name="Hamady M."/>
            <person name="Martens E.C."/>
            <person name="Henrissat B."/>
            <person name="Coutinho P.M."/>
            <person name="Minx P."/>
            <person name="Latreille P."/>
            <person name="Cordum H."/>
            <person name="Van Brunt A."/>
            <person name="Kim K."/>
            <person name="Fulton R.S."/>
            <person name="Fulton L.A."/>
            <person name="Clifton S.W."/>
            <person name="Wilson R.K."/>
            <person name="Knight R.D."/>
            <person name="Gordon J.I."/>
        </authorList>
    </citation>
    <scope>NUCLEOTIDE SEQUENCE [LARGE SCALE GENOMIC DNA]</scope>
    <source>
        <strain>ATCC 8503 / DSM 20701 / CIP 104284 / JCM 5825 / NCTC 11152</strain>
    </source>
</reference>
<organism>
    <name type="scientific">Parabacteroides distasonis (strain ATCC 8503 / DSM 20701 / CIP 104284 / JCM 5825 / NCTC 11152)</name>
    <dbReference type="NCBI Taxonomy" id="435591"/>
    <lineage>
        <taxon>Bacteria</taxon>
        <taxon>Pseudomonadati</taxon>
        <taxon>Bacteroidota</taxon>
        <taxon>Bacteroidia</taxon>
        <taxon>Bacteroidales</taxon>
        <taxon>Tannerellaceae</taxon>
        <taxon>Parabacteroides</taxon>
    </lineage>
</organism>